<accession>Q8GZ81</accession>
<accession>Q9LI68</accession>
<feature type="chain" id="PRO_0000442089" description="O-fucosyltransferase 27">
    <location>
        <begin position="1"/>
        <end position="677"/>
    </location>
</feature>
<feature type="transmembrane region" description="Helical; Signal-anchor for type II membrane protein" evidence="4">
    <location>
        <begin position="15"/>
        <end position="35"/>
    </location>
</feature>
<feature type="region of interest" description="Disordered" evidence="3">
    <location>
        <begin position="410"/>
        <end position="437"/>
    </location>
</feature>
<feature type="region of interest" description="Disordered" evidence="3">
    <location>
        <begin position="619"/>
        <end position="677"/>
    </location>
</feature>
<feature type="compositionally biased region" description="Acidic residues" evidence="3">
    <location>
        <begin position="622"/>
        <end position="631"/>
    </location>
</feature>
<feature type="compositionally biased region" description="Low complexity" evidence="3">
    <location>
        <begin position="644"/>
        <end position="658"/>
    </location>
</feature>
<feature type="compositionally biased region" description="Acidic residues" evidence="3">
    <location>
        <begin position="665"/>
        <end position="677"/>
    </location>
</feature>
<feature type="glycosylation site" description="N-linked (GlcNAc...) asparagine" evidence="2">
    <location>
        <position position="130"/>
    </location>
</feature>
<feature type="glycosylation site" description="N-linked (GlcNAc...) asparagine" evidence="2">
    <location>
        <position position="542"/>
    </location>
</feature>
<feature type="glycosylation site" description="N-linked (GlcNAc...) asparagine" evidence="2">
    <location>
        <position position="592"/>
    </location>
</feature>
<feature type="glycosylation site" description="N-linked (GlcNAc...) asparagine" evidence="2">
    <location>
        <position position="651"/>
    </location>
</feature>
<name>OFT27_ARATH</name>
<organism>
    <name type="scientific">Arabidopsis thaliana</name>
    <name type="common">Mouse-ear cress</name>
    <dbReference type="NCBI Taxonomy" id="3702"/>
    <lineage>
        <taxon>Eukaryota</taxon>
        <taxon>Viridiplantae</taxon>
        <taxon>Streptophyta</taxon>
        <taxon>Embryophyta</taxon>
        <taxon>Tracheophyta</taxon>
        <taxon>Spermatophyta</taxon>
        <taxon>Magnoliopsida</taxon>
        <taxon>eudicotyledons</taxon>
        <taxon>Gunneridae</taxon>
        <taxon>Pentapetalae</taxon>
        <taxon>rosids</taxon>
        <taxon>malvids</taxon>
        <taxon>Brassicales</taxon>
        <taxon>Brassicaceae</taxon>
        <taxon>Camelineae</taxon>
        <taxon>Arabidopsis</taxon>
    </lineage>
</organism>
<sequence length="677" mass="76904">MKGEGKVFLKSRMKWIGLLGLVLSAFSLLVHFLLAGFTDDSISDYSIPVTIFSWRPIFDNPRFARHTPLYRRLWGPTRHVETLLPDANPRGFHSDPPARTNGFVFVRIQGGFHEIRNSIPDVVAVSRLLNATLVIPEIQSTTSSKGISSQFKSFAYLYNEEHFMATIANDVRVVKTLPKNLKWARRKKQIPSFKVSYGSSPYYYLHHVLPVLIKHSVVELVVPHGGCLQAILPSDLEEYQRLRCRVAFHGLQFRKEVQELSTKVLQRLRPLGRPFIAYDPGMTREALAYHGCAELFQDVHTELIQHKRAWMIKRGIVKGKLSVDSAEQRLAGLCPLMPEEVGILLRAYGYSWDTIIYVAGGEVFGGQRTLIPLHGMFENVVDRTSLSTSWELAKMYGREAKHNDIKKMTPPSIEVETKHDSLKSTRQRPQPLPPPPARPKYYNIEGWWGWVAESDNEPESTVIELRTNAHKLLWEAIDYVVSVEADVFISGFDRDGKGHPSFASLVMGHRLYQSASAKTFRPDRKQIAMLLEEIRDHMYEANHTWITSVRKLLKRSILEGLMESSKRSKAFSFLSHPVPECSCITRTHPVSNATNLGVTHRCPQWVDGAVSERLKEYKNAEKEEDLDEEDLSSSGLFFGHKESGGNNNGNNETVNSEANNKEEGQLEDQEELEGSER</sequence>
<reference key="1">
    <citation type="submission" date="2017-04" db="EMBL/GenBank/DDBJ databases">
        <title>Arabidopsis glycosyltransferases: an update.</title>
        <authorList>
            <person name="Zeng W."/>
            <person name="Gluza P."/>
            <person name="Heazlewood J."/>
        </authorList>
    </citation>
    <scope>NUCLEOTIDE SEQUENCE [MRNA]</scope>
    <source>
        <strain>cv. Columbia</strain>
    </source>
</reference>
<reference key="2">
    <citation type="journal article" date="2000" name="DNA Res.">
        <title>Structural analysis of Arabidopsis thaliana chromosome 3. II. Sequence features of the 4,251,695 bp regions covered by 90 P1, TAC and BAC clones.</title>
        <authorList>
            <person name="Kaneko T."/>
            <person name="Katoh T."/>
            <person name="Sato S."/>
            <person name="Nakamura Y."/>
            <person name="Asamizu E."/>
            <person name="Tabata S."/>
        </authorList>
    </citation>
    <scope>NUCLEOTIDE SEQUENCE [LARGE SCALE GENOMIC DNA]</scope>
    <source>
        <strain>cv. Columbia</strain>
    </source>
</reference>
<reference key="3">
    <citation type="journal article" date="2017" name="Plant J.">
        <title>Araport11: a complete reannotation of the Arabidopsis thaliana reference genome.</title>
        <authorList>
            <person name="Cheng C.Y."/>
            <person name="Krishnakumar V."/>
            <person name="Chan A.P."/>
            <person name="Thibaud-Nissen F."/>
            <person name="Schobel S."/>
            <person name="Town C.D."/>
        </authorList>
    </citation>
    <scope>GENOME REANNOTATION</scope>
    <source>
        <strain>cv. Columbia</strain>
    </source>
</reference>
<reference key="4">
    <citation type="journal article" date="2002" name="Science">
        <title>Functional annotation of a full-length Arabidopsis cDNA collection.</title>
        <authorList>
            <person name="Seki M."/>
            <person name="Narusaka M."/>
            <person name="Kamiya A."/>
            <person name="Ishida J."/>
            <person name="Satou M."/>
            <person name="Sakurai T."/>
            <person name="Nakajima M."/>
            <person name="Enju A."/>
            <person name="Akiyama K."/>
            <person name="Oono Y."/>
            <person name="Muramatsu M."/>
            <person name="Hayashizaki Y."/>
            <person name="Kawai J."/>
            <person name="Carninci P."/>
            <person name="Itoh M."/>
            <person name="Ishii Y."/>
            <person name="Arakawa T."/>
            <person name="Shibata K."/>
            <person name="Shinagawa A."/>
            <person name="Shinozaki K."/>
        </authorList>
    </citation>
    <scope>NUCLEOTIDE SEQUENCE [LARGE SCALE MRNA]</scope>
    <source>
        <strain>cv. Columbia</strain>
    </source>
</reference>
<reference key="5">
    <citation type="journal article" date="2003" name="Science">
        <title>Empirical analysis of transcriptional activity in the Arabidopsis genome.</title>
        <authorList>
            <person name="Yamada K."/>
            <person name="Lim J."/>
            <person name="Dale J.M."/>
            <person name="Chen H."/>
            <person name="Shinn P."/>
            <person name="Palm C.J."/>
            <person name="Southwick A.M."/>
            <person name="Wu H.C."/>
            <person name="Kim C.J."/>
            <person name="Nguyen M."/>
            <person name="Pham P.K."/>
            <person name="Cheuk R.F."/>
            <person name="Karlin-Newmann G."/>
            <person name="Liu S.X."/>
            <person name="Lam B."/>
            <person name="Sakano H."/>
            <person name="Wu T."/>
            <person name="Yu G."/>
            <person name="Miranda M."/>
            <person name="Quach H.L."/>
            <person name="Tripp M."/>
            <person name="Chang C.H."/>
            <person name="Lee J.M."/>
            <person name="Toriumi M.J."/>
            <person name="Chan M.M."/>
            <person name="Tang C.C."/>
            <person name="Onodera C.S."/>
            <person name="Deng J.M."/>
            <person name="Akiyama K."/>
            <person name="Ansari Y."/>
            <person name="Arakawa T."/>
            <person name="Banh J."/>
            <person name="Banno F."/>
            <person name="Bowser L."/>
            <person name="Brooks S.Y."/>
            <person name="Carninci P."/>
            <person name="Chao Q."/>
            <person name="Choy N."/>
            <person name="Enju A."/>
            <person name="Goldsmith A.D."/>
            <person name="Gurjal M."/>
            <person name="Hansen N.F."/>
            <person name="Hayashizaki Y."/>
            <person name="Johnson-Hopson C."/>
            <person name="Hsuan V.W."/>
            <person name="Iida K."/>
            <person name="Karnes M."/>
            <person name="Khan S."/>
            <person name="Koesema E."/>
            <person name="Ishida J."/>
            <person name="Jiang P.X."/>
            <person name="Jones T."/>
            <person name="Kawai J."/>
            <person name="Kamiya A."/>
            <person name="Meyers C."/>
            <person name="Nakajima M."/>
            <person name="Narusaka M."/>
            <person name="Seki M."/>
            <person name="Sakurai T."/>
            <person name="Satou M."/>
            <person name="Tamse R."/>
            <person name="Vaysberg M."/>
            <person name="Wallender E.K."/>
            <person name="Wong C."/>
            <person name="Yamamura Y."/>
            <person name="Yuan S."/>
            <person name="Shinozaki K."/>
            <person name="Davis R.W."/>
            <person name="Theologis A."/>
            <person name="Ecker J.R."/>
        </authorList>
    </citation>
    <scope>NUCLEOTIDE SEQUENCE [LARGE SCALE MRNA]</scope>
    <source>
        <strain>cv. Columbia</strain>
    </source>
</reference>
<reference key="6">
    <citation type="journal article" date="2012" name="Front. Plant Sci.">
        <title>Plant glycosyltransferases beyond CAZy: a perspective on DUF families.</title>
        <authorList>
            <person name="Hansen S.F."/>
            <person name="Harholt J."/>
            <person name="Oikawa A."/>
            <person name="Scheller H.V."/>
        </authorList>
    </citation>
    <scope>GENE FAMILY</scope>
    <scope>REVIEW</scope>
</reference>
<reference key="7">
    <citation type="journal article" date="2012" name="PLoS ONE">
        <title>The FRIABLE1 gene product affects cell adhesion in Arabidopsis.</title>
        <authorList>
            <person name="Neumetzler L."/>
            <person name="Humphrey T."/>
            <person name="Lumba S."/>
            <person name="Snyder S."/>
            <person name="Yeats T.H."/>
            <person name="Usadel B."/>
            <person name="Vasilevski A."/>
            <person name="Patel J."/>
            <person name="Rose J.K."/>
            <person name="Persson S."/>
            <person name="Bonetta D."/>
        </authorList>
    </citation>
    <scope>GENE FAMILY</scope>
</reference>
<reference key="8">
    <citation type="journal article" date="2012" name="PLoS ONE">
        <title>Identification of putative rhamnogalacturonan-II specific glycosyltransferases in Arabidopsis using a combination of bioinformatics approaches.</title>
        <authorList>
            <person name="Voxeur A."/>
            <person name="Andre A."/>
            <person name="Breton C."/>
            <person name="Lerouge P."/>
        </authorList>
    </citation>
    <scope>GENE FAMILY</scope>
</reference>
<reference key="9">
    <citation type="journal article" date="2013" name="Plant J.">
        <title>Identification of an additional protein involved in mannan biosynthesis.</title>
        <authorList>
            <person name="Wang Y."/>
            <person name="Mortimer J.C."/>
            <person name="Davis J."/>
            <person name="Dupree P."/>
            <person name="Keegstra K."/>
        </authorList>
    </citation>
    <scope>GENE FAMILY</scope>
</reference>
<reference key="10">
    <citation type="journal article" date="2014" name="Plant J.">
        <title>The plant glycosyltransferase clone collection for functional genomics.</title>
        <authorList>
            <person name="Lao J."/>
            <person name="Oikawa A."/>
            <person name="Bromley J.R."/>
            <person name="McInerney P."/>
            <person name="Suttangkakul A."/>
            <person name="Smith-Moritz A.M."/>
            <person name="Plahar H."/>
            <person name="Chiu T.-Y."/>
            <person name="Gonzalez Fernandez-Nino S.M.G."/>
            <person name="Ebert B."/>
            <person name="Yang F."/>
            <person name="Christiansen K.M."/>
            <person name="Hansen S.F."/>
            <person name="Stonebloom S."/>
            <person name="Adams P.D."/>
            <person name="Ronald P.C."/>
            <person name="Hillson N.J."/>
            <person name="Hadi M.Z."/>
            <person name="Vega-Sanchez M.E."/>
            <person name="Loque D."/>
            <person name="Scheller H.V."/>
            <person name="Heazlewood J.L."/>
        </authorList>
    </citation>
    <scope>WEB RESOURCE</scope>
</reference>
<proteinExistence type="evidence at transcript level"/>
<gene>
    <name evidence="4" type="primary">OFUT27</name>
    <name evidence="5" type="ordered locus">At3g30300</name>
    <name evidence="7" type="ORF">T6J22.5</name>
</gene>
<protein>
    <recommendedName>
        <fullName evidence="4">O-fucosyltransferase 27</fullName>
        <shortName evidence="4">O-FucT-27</shortName>
        <ecNumber evidence="4">2.4.1.-</ecNumber>
    </recommendedName>
    <alternativeName>
        <fullName evidence="6">O-fucosyltransferase family protein</fullName>
    </alternativeName>
</protein>
<dbReference type="EC" id="2.4.1.-" evidence="4"/>
<dbReference type="EMBL" id="KY906069">
    <property type="protein sequence ID" value="ARJ31433.1"/>
    <property type="molecule type" value="mRNA"/>
</dbReference>
<dbReference type="EMBL" id="AP001314">
    <property type="protein sequence ID" value="BAB02232.1"/>
    <property type="status" value="ALT_SEQ"/>
    <property type="molecule type" value="Genomic_DNA"/>
</dbReference>
<dbReference type="EMBL" id="CP002686">
    <property type="protein sequence ID" value="AEE77631.1"/>
    <property type="molecule type" value="Genomic_DNA"/>
</dbReference>
<dbReference type="EMBL" id="CP002686">
    <property type="protein sequence ID" value="ANM64132.1"/>
    <property type="molecule type" value="Genomic_DNA"/>
</dbReference>
<dbReference type="EMBL" id="AK117160">
    <property type="protein sequence ID" value="BAC41838.1"/>
    <property type="molecule type" value="mRNA"/>
</dbReference>
<dbReference type="EMBL" id="BT008297">
    <property type="protein sequence ID" value="AAP37656.1"/>
    <property type="molecule type" value="mRNA"/>
</dbReference>
<dbReference type="RefSeq" id="NP_001326180.1">
    <property type="nucleotide sequence ID" value="NM_001339044.1"/>
</dbReference>
<dbReference type="RefSeq" id="NP_189649.2">
    <property type="nucleotide sequence ID" value="NM_113929.5"/>
</dbReference>
<dbReference type="FunCoup" id="Q8GZ81">
    <property type="interactions" value="1642"/>
</dbReference>
<dbReference type="STRING" id="3702.Q8GZ81"/>
<dbReference type="GlyCosmos" id="Q8GZ81">
    <property type="glycosylation" value="4 sites, No reported glycans"/>
</dbReference>
<dbReference type="GlyGen" id="Q8GZ81">
    <property type="glycosylation" value="4 sites"/>
</dbReference>
<dbReference type="PaxDb" id="3702-AT3G30300.1"/>
<dbReference type="ProteomicsDB" id="250796"/>
<dbReference type="EnsemblPlants" id="AT3G30300.1">
    <property type="protein sequence ID" value="AT3G30300.1"/>
    <property type="gene ID" value="AT3G30300"/>
</dbReference>
<dbReference type="EnsemblPlants" id="AT3G30300.2">
    <property type="protein sequence ID" value="AT3G30300.2"/>
    <property type="gene ID" value="AT3G30300"/>
</dbReference>
<dbReference type="GeneID" id="822730"/>
<dbReference type="Gramene" id="AT3G30300.1">
    <property type="protein sequence ID" value="AT3G30300.1"/>
    <property type="gene ID" value="AT3G30300"/>
</dbReference>
<dbReference type="Gramene" id="AT3G30300.2">
    <property type="protein sequence ID" value="AT3G30300.2"/>
    <property type="gene ID" value="AT3G30300"/>
</dbReference>
<dbReference type="KEGG" id="ath:AT3G30300"/>
<dbReference type="Araport" id="AT3G30300"/>
<dbReference type="TAIR" id="AT3G30300"/>
<dbReference type="eggNOG" id="ENOG502QQP9">
    <property type="taxonomic scope" value="Eukaryota"/>
</dbReference>
<dbReference type="HOGENOM" id="CLU_020836_0_0_1"/>
<dbReference type="InParanoid" id="Q8GZ81"/>
<dbReference type="OMA" id="YHANHTW"/>
<dbReference type="PhylomeDB" id="Q8GZ81"/>
<dbReference type="PRO" id="PR:Q8GZ81"/>
<dbReference type="Proteomes" id="UP000006548">
    <property type="component" value="Chromosome 3"/>
</dbReference>
<dbReference type="ExpressionAtlas" id="Q8GZ81">
    <property type="expression patterns" value="baseline and differential"/>
</dbReference>
<dbReference type="GO" id="GO:0005768">
    <property type="term" value="C:endosome"/>
    <property type="evidence" value="ECO:0007005"/>
    <property type="project" value="TAIR"/>
</dbReference>
<dbReference type="GO" id="GO:0005794">
    <property type="term" value="C:Golgi apparatus"/>
    <property type="evidence" value="ECO:0007005"/>
    <property type="project" value="TAIR"/>
</dbReference>
<dbReference type="GO" id="GO:0000138">
    <property type="term" value="C:Golgi trans cisterna"/>
    <property type="evidence" value="ECO:0007005"/>
    <property type="project" value="TAIR"/>
</dbReference>
<dbReference type="GO" id="GO:0016020">
    <property type="term" value="C:membrane"/>
    <property type="evidence" value="ECO:0007669"/>
    <property type="project" value="UniProtKB-SubCell"/>
</dbReference>
<dbReference type="GO" id="GO:0005802">
    <property type="term" value="C:trans-Golgi network"/>
    <property type="evidence" value="ECO:0007005"/>
    <property type="project" value="TAIR"/>
</dbReference>
<dbReference type="GO" id="GO:0016757">
    <property type="term" value="F:glycosyltransferase activity"/>
    <property type="evidence" value="ECO:0007669"/>
    <property type="project" value="UniProtKB-KW"/>
</dbReference>
<dbReference type="GO" id="GO:0006004">
    <property type="term" value="P:fucose metabolic process"/>
    <property type="evidence" value="ECO:0007669"/>
    <property type="project" value="UniProtKB-KW"/>
</dbReference>
<dbReference type="InterPro" id="IPR019378">
    <property type="entry name" value="GDP-Fuc_O-FucTrfase"/>
</dbReference>
<dbReference type="PANTHER" id="PTHR31741:SF46">
    <property type="entry name" value="O-FUCOSYLTRANSFERASE 27"/>
    <property type="match status" value="1"/>
</dbReference>
<dbReference type="PANTHER" id="PTHR31741">
    <property type="entry name" value="OS02G0726500 PROTEIN-RELATED"/>
    <property type="match status" value="1"/>
</dbReference>
<dbReference type="Pfam" id="PF10250">
    <property type="entry name" value="O-FucT"/>
    <property type="match status" value="1"/>
</dbReference>
<comment type="pathway">
    <text evidence="4">Glycan metabolism.</text>
</comment>
<comment type="subcellular location">
    <subcellularLocation>
        <location evidence="1">Membrane</location>
        <topology evidence="4">Single-pass type II membrane protein</topology>
    </subcellularLocation>
</comment>
<comment type="similarity">
    <text evidence="4">Belongs to the glycosyltransferase GT106 family.</text>
</comment>
<comment type="sequence caution" evidence="4">
    <conflict type="erroneous gene model prediction">
        <sequence resource="EMBL-CDS" id="BAB02232"/>
    </conflict>
</comment>
<keyword id="KW-0119">Carbohydrate metabolism</keyword>
<keyword id="KW-0294">Fucose metabolism</keyword>
<keyword id="KW-0325">Glycoprotein</keyword>
<keyword id="KW-0328">Glycosyltransferase</keyword>
<keyword id="KW-0472">Membrane</keyword>
<keyword id="KW-1185">Reference proteome</keyword>
<keyword id="KW-0735">Signal-anchor</keyword>
<keyword id="KW-0808">Transferase</keyword>
<keyword id="KW-0812">Transmembrane</keyword>
<keyword id="KW-1133">Transmembrane helix</keyword>
<evidence type="ECO:0000255" key="1"/>
<evidence type="ECO:0000255" key="2">
    <source>
        <dbReference type="PROSITE-ProRule" id="PRU00498"/>
    </source>
</evidence>
<evidence type="ECO:0000256" key="3">
    <source>
        <dbReference type="SAM" id="MobiDB-lite"/>
    </source>
</evidence>
<evidence type="ECO:0000305" key="4"/>
<evidence type="ECO:0000312" key="5">
    <source>
        <dbReference type="Araport" id="AT3G30300"/>
    </source>
</evidence>
<evidence type="ECO:0000312" key="6">
    <source>
        <dbReference type="EMBL" id="ARJ31433.1"/>
    </source>
</evidence>
<evidence type="ECO:0000312" key="7">
    <source>
        <dbReference type="EMBL" id="BAB02232.1"/>
    </source>
</evidence>